<accession>Q8TZK0</accession>
<dbReference type="EMBL" id="AE009950">
    <property type="protein sequence ID" value="AAL82115.1"/>
    <property type="molecule type" value="Genomic_DNA"/>
</dbReference>
<dbReference type="RefSeq" id="WP_011013135.1">
    <property type="nucleotide sequence ID" value="NZ_CP023154.1"/>
</dbReference>
<dbReference type="PDB" id="4V6U">
    <property type="method" value="EM"/>
    <property type="resolution" value="6.60 A"/>
    <property type="chains" value="BH=1-164"/>
</dbReference>
<dbReference type="PDBsum" id="4V6U"/>
<dbReference type="SMR" id="Q8TZK0"/>
<dbReference type="STRING" id="186497.PF1991"/>
<dbReference type="PaxDb" id="186497-PF1991"/>
<dbReference type="KEGG" id="pfu:PF1991"/>
<dbReference type="PATRIC" id="fig|186497.12.peg.2067"/>
<dbReference type="eggNOG" id="arCOG04372">
    <property type="taxonomic scope" value="Archaea"/>
</dbReference>
<dbReference type="HOGENOM" id="CLU_074237_4_0_2"/>
<dbReference type="OrthoDB" id="8842at2157"/>
<dbReference type="PhylomeDB" id="Q8TZK0"/>
<dbReference type="Proteomes" id="UP000001013">
    <property type="component" value="Chromosome"/>
</dbReference>
<dbReference type="GO" id="GO:0015934">
    <property type="term" value="C:large ribosomal subunit"/>
    <property type="evidence" value="ECO:0007669"/>
    <property type="project" value="TreeGrafter"/>
</dbReference>
<dbReference type="GO" id="GO:0070180">
    <property type="term" value="F:large ribosomal subunit rRNA binding"/>
    <property type="evidence" value="ECO:0007669"/>
    <property type="project" value="UniProtKB-UniRule"/>
</dbReference>
<dbReference type="GO" id="GO:0003735">
    <property type="term" value="F:structural constituent of ribosome"/>
    <property type="evidence" value="ECO:0007669"/>
    <property type="project" value="InterPro"/>
</dbReference>
<dbReference type="GO" id="GO:0006412">
    <property type="term" value="P:translation"/>
    <property type="evidence" value="ECO:0007669"/>
    <property type="project" value="UniProtKB-UniRule"/>
</dbReference>
<dbReference type="CDD" id="cd00349">
    <property type="entry name" value="Ribosomal_L11"/>
    <property type="match status" value="1"/>
</dbReference>
<dbReference type="FunFam" id="1.10.10.250:FF:000006">
    <property type="entry name" value="50S ribosomal protein L11"/>
    <property type="match status" value="1"/>
</dbReference>
<dbReference type="FunFam" id="3.30.1550.10:FF:000007">
    <property type="entry name" value="50S ribosomal protein L11"/>
    <property type="match status" value="1"/>
</dbReference>
<dbReference type="Gene3D" id="1.10.10.250">
    <property type="entry name" value="Ribosomal protein L11, C-terminal domain"/>
    <property type="match status" value="1"/>
</dbReference>
<dbReference type="Gene3D" id="3.30.1550.10">
    <property type="entry name" value="Ribosomal protein L11/L12, N-terminal domain"/>
    <property type="match status" value="1"/>
</dbReference>
<dbReference type="HAMAP" id="MF_00736">
    <property type="entry name" value="Ribosomal_uL11"/>
    <property type="match status" value="1"/>
</dbReference>
<dbReference type="InterPro" id="IPR000911">
    <property type="entry name" value="Ribosomal_uL11"/>
</dbReference>
<dbReference type="InterPro" id="IPR020783">
    <property type="entry name" value="Ribosomal_uL11_C"/>
</dbReference>
<dbReference type="InterPro" id="IPR036769">
    <property type="entry name" value="Ribosomal_uL11_C_sf"/>
</dbReference>
<dbReference type="InterPro" id="IPR020785">
    <property type="entry name" value="Ribosomal_uL11_CS"/>
</dbReference>
<dbReference type="InterPro" id="IPR020784">
    <property type="entry name" value="Ribosomal_uL11_N"/>
</dbReference>
<dbReference type="InterPro" id="IPR036796">
    <property type="entry name" value="Ribosomal_uL11_N_sf"/>
</dbReference>
<dbReference type="NCBIfam" id="NF002232">
    <property type="entry name" value="PRK01143.1"/>
    <property type="match status" value="1"/>
</dbReference>
<dbReference type="PANTHER" id="PTHR11661">
    <property type="entry name" value="60S RIBOSOMAL PROTEIN L12"/>
    <property type="match status" value="1"/>
</dbReference>
<dbReference type="PANTHER" id="PTHR11661:SF1">
    <property type="entry name" value="LARGE RIBOSOMAL SUBUNIT PROTEIN UL11M"/>
    <property type="match status" value="1"/>
</dbReference>
<dbReference type="Pfam" id="PF00298">
    <property type="entry name" value="Ribosomal_L11"/>
    <property type="match status" value="1"/>
</dbReference>
<dbReference type="Pfam" id="PF03946">
    <property type="entry name" value="Ribosomal_L11_N"/>
    <property type="match status" value="1"/>
</dbReference>
<dbReference type="SMART" id="SM00649">
    <property type="entry name" value="RL11"/>
    <property type="match status" value="1"/>
</dbReference>
<dbReference type="SUPFAM" id="SSF54747">
    <property type="entry name" value="Ribosomal L11/L12e N-terminal domain"/>
    <property type="match status" value="1"/>
</dbReference>
<dbReference type="SUPFAM" id="SSF46906">
    <property type="entry name" value="Ribosomal protein L11, C-terminal domain"/>
    <property type="match status" value="1"/>
</dbReference>
<dbReference type="PROSITE" id="PS00359">
    <property type="entry name" value="RIBOSOMAL_L11"/>
    <property type="match status" value="1"/>
</dbReference>
<gene>
    <name evidence="1" type="primary">rpl11</name>
    <name type="ordered locus">PF1991</name>
</gene>
<comment type="function">
    <text evidence="1">Forms part of the ribosomal stalk which helps the ribosome interact with GTP-bound translation factors.</text>
</comment>
<comment type="subunit">
    <text evidence="1 2">Part of the ribosomal stalk of the 50S ribosomal subunit (PubMed:23222135). Interacts with L10 and the large rRNA to form the base of the stalk. L10 forms an elongated spine to which L12 dimers bind in a sequential fashion forming a multimeric L10(L12)X complex.</text>
</comment>
<comment type="similarity">
    <text evidence="1">Belongs to the universal ribosomal protein uL11 family.</text>
</comment>
<keyword id="KW-0002">3D-structure</keyword>
<keyword id="KW-1185">Reference proteome</keyword>
<keyword id="KW-0687">Ribonucleoprotein</keyword>
<keyword id="KW-0689">Ribosomal protein</keyword>
<keyword id="KW-0694">RNA-binding</keyword>
<keyword id="KW-0699">rRNA-binding</keyword>
<protein>
    <recommendedName>
        <fullName evidence="1">Large ribosomal subunit protein uL11</fullName>
    </recommendedName>
    <alternativeName>
        <fullName>50S ribosomal protein L11</fullName>
    </alternativeName>
</protein>
<feature type="chain" id="PRO_0000104444" description="Large ribosomal subunit protein uL11">
    <location>
        <begin position="1"/>
        <end position="164"/>
    </location>
</feature>
<evidence type="ECO:0000255" key="1">
    <source>
        <dbReference type="HAMAP-Rule" id="MF_00736"/>
    </source>
</evidence>
<evidence type="ECO:0000269" key="2">
    <source>
    </source>
</evidence>
<evidence type="ECO:0007744" key="3">
    <source>
        <dbReference type="PDB" id="4V6U"/>
    </source>
</evidence>
<sequence>MPKQVVEVLVEGGKATPGPPLGPAIGPLGLNVKQVVDKINEATKDFAGMQVPVKIIVDPVTKQFEIEVGVPPTSQLIKKELGLEKGSGEPKHNIVGNLTMEQVIKIAKMKKDQMLALTLKAAAKEVIGTALSMGVTVEGKDPREVQKEIDEGVYDELFEKAEKE</sequence>
<name>RL11_PYRFU</name>
<organism>
    <name type="scientific">Pyrococcus furiosus (strain ATCC 43587 / DSM 3638 / JCM 8422 / Vc1)</name>
    <dbReference type="NCBI Taxonomy" id="186497"/>
    <lineage>
        <taxon>Archaea</taxon>
        <taxon>Methanobacteriati</taxon>
        <taxon>Methanobacteriota</taxon>
        <taxon>Thermococci</taxon>
        <taxon>Thermococcales</taxon>
        <taxon>Thermococcaceae</taxon>
        <taxon>Pyrococcus</taxon>
    </lineage>
</organism>
<proteinExistence type="evidence at protein level"/>
<reference key="1">
    <citation type="journal article" date="1999" name="Genetics">
        <title>Divergence of the hyperthermophilic archaea Pyrococcus furiosus and P. horikoshii inferred from complete genomic sequences.</title>
        <authorList>
            <person name="Maeder D.L."/>
            <person name="Weiss R.B."/>
            <person name="Dunn D.M."/>
            <person name="Cherry J.L."/>
            <person name="Gonzalez J.M."/>
            <person name="DiRuggiero J."/>
            <person name="Robb F.T."/>
        </authorList>
    </citation>
    <scope>NUCLEOTIDE SEQUENCE [LARGE SCALE GENOMIC DNA]</scope>
    <source>
        <strain>ATCC 43587 / DSM 3638 / JCM 8422 / Vc1</strain>
    </source>
</reference>
<reference evidence="3" key="2">
    <citation type="journal article" date="2013" name="Nucleic Acids Res.">
        <title>Promiscuous behaviour of archaeal ribosomal proteins: implications for eukaryotic ribosome evolution.</title>
        <authorList>
            <person name="Armache J.P."/>
            <person name="Anger A.M."/>
            <person name="Marquez V."/>
            <person name="Franckenberg S."/>
            <person name="Frohlich T."/>
            <person name="Villa E."/>
            <person name="Berninghausen O."/>
            <person name="Thomm M."/>
            <person name="Arnold G.J."/>
            <person name="Beckmann R."/>
            <person name="Wilson D.N."/>
        </authorList>
    </citation>
    <scope>STRUCTURE BY ELECTRON MICROSCOPY (6.60 ANGSTROMS) IN THE 70S RIBOSOME</scope>
    <scope>SUBUNIT</scope>
</reference>